<comment type="similarity">
    <text evidence="1">Belongs to the bacterial ribosomal protein bL28 family.</text>
</comment>
<protein>
    <recommendedName>
        <fullName evidence="1">Large ribosomal subunit protein bL28</fullName>
    </recommendedName>
    <alternativeName>
        <fullName evidence="2">50S ribosomal protein L28</fullName>
    </alternativeName>
</protein>
<sequence length="83" mass="9516">MSKVCDITGKRPRVGNKVSHANNKTKRRFYPNLQFKKFYVPETNSWIVLRVSTSVIRTINKKGILEVIKEAQRKGTISQLIVG</sequence>
<reference key="1">
    <citation type="journal article" date="2010" name="J. Bacteriol.">
        <title>The genome of the amoeba symbiont 'Candidatus Amoebophilus asiaticus' reveals common mechanisms for host cell interaction among amoeba-associated bacteria.</title>
        <authorList>
            <person name="Schmitz-Esser S."/>
            <person name="Tischler P."/>
            <person name="Arnold R."/>
            <person name="Montanaro J."/>
            <person name="Wagner M."/>
            <person name="Rattei T."/>
            <person name="Horn M."/>
        </authorList>
    </citation>
    <scope>NUCLEOTIDE SEQUENCE [LARGE SCALE GENOMIC DNA]</scope>
    <source>
        <strain>5a2</strain>
    </source>
</reference>
<keyword id="KW-1185">Reference proteome</keyword>
<keyword id="KW-0687">Ribonucleoprotein</keyword>
<keyword id="KW-0689">Ribosomal protein</keyword>
<gene>
    <name evidence="1" type="primary">rpmB</name>
    <name type="ordered locus">Aasi_0570</name>
</gene>
<name>RL28_AMOA5</name>
<dbReference type="EMBL" id="CP001102">
    <property type="protein sequence ID" value="ACE05971.1"/>
    <property type="molecule type" value="Genomic_DNA"/>
</dbReference>
<dbReference type="RefSeq" id="WP_012472739.1">
    <property type="nucleotide sequence ID" value="NC_010830.1"/>
</dbReference>
<dbReference type="SMR" id="B3ERW9"/>
<dbReference type="STRING" id="452471.Aasi_0570"/>
<dbReference type="KEGG" id="aas:Aasi_0570"/>
<dbReference type="eggNOG" id="COG0227">
    <property type="taxonomic scope" value="Bacteria"/>
</dbReference>
<dbReference type="HOGENOM" id="CLU_064548_3_1_10"/>
<dbReference type="OrthoDB" id="9805609at2"/>
<dbReference type="Proteomes" id="UP000001227">
    <property type="component" value="Chromosome"/>
</dbReference>
<dbReference type="GO" id="GO:1990904">
    <property type="term" value="C:ribonucleoprotein complex"/>
    <property type="evidence" value="ECO:0007669"/>
    <property type="project" value="UniProtKB-KW"/>
</dbReference>
<dbReference type="GO" id="GO:0005840">
    <property type="term" value="C:ribosome"/>
    <property type="evidence" value="ECO:0007669"/>
    <property type="project" value="UniProtKB-KW"/>
</dbReference>
<dbReference type="GO" id="GO:0003735">
    <property type="term" value="F:structural constituent of ribosome"/>
    <property type="evidence" value="ECO:0007669"/>
    <property type="project" value="InterPro"/>
</dbReference>
<dbReference type="GO" id="GO:0006412">
    <property type="term" value="P:translation"/>
    <property type="evidence" value="ECO:0007669"/>
    <property type="project" value="UniProtKB-UniRule"/>
</dbReference>
<dbReference type="FunFam" id="2.30.170.40:FF:000001">
    <property type="entry name" value="50S ribosomal protein L28"/>
    <property type="match status" value="1"/>
</dbReference>
<dbReference type="Gene3D" id="2.30.170.40">
    <property type="entry name" value="Ribosomal protein L28/L24"/>
    <property type="match status" value="1"/>
</dbReference>
<dbReference type="HAMAP" id="MF_00373">
    <property type="entry name" value="Ribosomal_bL28"/>
    <property type="match status" value="1"/>
</dbReference>
<dbReference type="InterPro" id="IPR026569">
    <property type="entry name" value="Ribosomal_bL28"/>
</dbReference>
<dbReference type="InterPro" id="IPR034704">
    <property type="entry name" value="Ribosomal_bL28/bL31-like_sf"/>
</dbReference>
<dbReference type="InterPro" id="IPR001383">
    <property type="entry name" value="Ribosomal_bL28_bact-type"/>
</dbReference>
<dbReference type="InterPro" id="IPR037147">
    <property type="entry name" value="Ribosomal_bL28_sf"/>
</dbReference>
<dbReference type="NCBIfam" id="TIGR00009">
    <property type="entry name" value="L28"/>
    <property type="match status" value="1"/>
</dbReference>
<dbReference type="PANTHER" id="PTHR13528">
    <property type="entry name" value="39S RIBOSOMAL PROTEIN L28, MITOCHONDRIAL"/>
    <property type="match status" value="1"/>
</dbReference>
<dbReference type="PANTHER" id="PTHR13528:SF2">
    <property type="entry name" value="LARGE RIBOSOMAL SUBUNIT PROTEIN BL28M"/>
    <property type="match status" value="1"/>
</dbReference>
<dbReference type="Pfam" id="PF00830">
    <property type="entry name" value="Ribosomal_L28"/>
    <property type="match status" value="1"/>
</dbReference>
<dbReference type="SUPFAM" id="SSF143800">
    <property type="entry name" value="L28p-like"/>
    <property type="match status" value="1"/>
</dbReference>
<organism>
    <name type="scientific">Amoebophilus asiaticus (strain 5a2)</name>
    <dbReference type="NCBI Taxonomy" id="452471"/>
    <lineage>
        <taxon>Bacteria</taxon>
        <taxon>Pseudomonadati</taxon>
        <taxon>Bacteroidota</taxon>
        <taxon>Cytophagia</taxon>
        <taxon>Cytophagales</taxon>
        <taxon>Amoebophilaceae</taxon>
        <taxon>Candidatus Amoebophilus</taxon>
    </lineage>
</organism>
<feature type="chain" id="PRO_1000121578" description="Large ribosomal subunit protein bL28">
    <location>
        <begin position="1"/>
        <end position="83"/>
    </location>
</feature>
<evidence type="ECO:0000255" key="1">
    <source>
        <dbReference type="HAMAP-Rule" id="MF_00373"/>
    </source>
</evidence>
<evidence type="ECO:0000305" key="2"/>
<proteinExistence type="inferred from homology"/>
<accession>B3ERW9</accession>